<accession>O68260</accession>
<reference key="1">
    <citation type="journal article" date="1998" name="DNA Res.">
        <title>Sequence analysis of the Bacillus subtilis 168 chromosome region between the sspC and odhA loci (184 degrees-180 degrees).</title>
        <authorList>
            <person name="Ghim S.-Y."/>
            <person name="Choi S.-K."/>
            <person name="Shin B.-S."/>
            <person name="Jeong Y.-M."/>
            <person name="Sorokin A."/>
            <person name="Ehrlich S.D."/>
            <person name="Park S.-H."/>
        </authorList>
    </citation>
    <scope>NUCLEOTIDE SEQUENCE [GENOMIC DNA]</scope>
    <source>
        <strain>168</strain>
    </source>
</reference>
<reference key="2">
    <citation type="journal article" date="1997" name="Nature">
        <title>The complete genome sequence of the Gram-positive bacterium Bacillus subtilis.</title>
        <authorList>
            <person name="Kunst F."/>
            <person name="Ogasawara N."/>
            <person name="Moszer I."/>
            <person name="Albertini A.M."/>
            <person name="Alloni G."/>
            <person name="Azevedo V."/>
            <person name="Bertero M.G."/>
            <person name="Bessieres P."/>
            <person name="Bolotin A."/>
            <person name="Borchert S."/>
            <person name="Borriss R."/>
            <person name="Boursier L."/>
            <person name="Brans A."/>
            <person name="Braun M."/>
            <person name="Brignell S.C."/>
            <person name="Bron S."/>
            <person name="Brouillet S."/>
            <person name="Bruschi C.V."/>
            <person name="Caldwell B."/>
            <person name="Capuano V."/>
            <person name="Carter N.M."/>
            <person name="Choi S.-K."/>
            <person name="Codani J.-J."/>
            <person name="Connerton I.F."/>
            <person name="Cummings N.J."/>
            <person name="Daniel R.A."/>
            <person name="Denizot F."/>
            <person name="Devine K.M."/>
            <person name="Duesterhoeft A."/>
            <person name="Ehrlich S.D."/>
            <person name="Emmerson P.T."/>
            <person name="Entian K.-D."/>
            <person name="Errington J."/>
            <person name="Fabret C."/>
            <person name="Ferrari E."/>
            <person name="Foulger D."/>
            <person name="Fritz C."/>
            <person name="Fujita M."/>
            <person name="Fujita Y."/>
            <person name="Fuma S."/>
            <person name="Galizzi A."/>
            <person name="Galleron N."/>
            <person name="Ghim S.-Y."/>
            <person name="Glaser P."/>
            <person name="Goffeau A."/>
            <person name="Golightly E.J."/>
            <person name="Grandi G."/>
            <person name="Guiseppi G."/>
            <person name="Guy B.J."/>
            <person name="Haga K."/>
            <person name="Haiech J."/>
            <person name="Harwood C.R."/>
            <person name="Henaut A."/>
            <person name="Hilbert H."/>
            <person name="Holsappel S."/>
            <person name="Hosono S."/>
            <person name="Hullo M.-F."/>
            <person name="Itaya M."/>
            <person name="Jones L.-M."/>
            <person name="Joris B."/>
            <person name="Karamata D."/>
            <person name="Kasahara Y."/>
            <person name="Klaerr-Blanchard M."/>
            <person name="Klein C."/>
            <person name="Kobayashi Y."/>
            <person name="Koetter P."/>
            <person name="Koningstein G."/>
            <person name="Krogh S."/>
            <person name="Kumano M."/>
            <person name="Kurita K."/>
            <person name="Lapidus A."/>
            <person name="Lardinois S."/>
            <person name="Lauber J."/>
            <person name="Lazarevic V."/>
            <person name="Lee S.-M."/>
            <person name="Levine A."/>
            <person name="Liu H."/>
            <person name="Masuda S."/>
            <person name="Mauel C."/>
            <person name="Medigue C."/>
            <person name="Medina N."/>
            <person name="Mellado R.P."/>
            <person name="Mizuno M."/>
            <person name="Moestl D."/>
            <person name="Nakai S."/>
            <person name="Noback M."/>
            <person name="Noone D."/>
            <person name="O'Reilly M."/>
            <person name="Ogawa K."/>
            <person name="Ogiwara A."/>
            <person name="Oudega B."/>
            <person name="Park S.-H."/>
            <person name="Parro V."/>
            <person name="Pohl T.M."/>
            <person name="Portetelle D."/>
            <person name="Porwollik S."/>
            <person name="Prescott A.M."/>
            <person name="Presecan E."/>
            <person name="Pujic P."/>
            <person name="Purnelle B."/>
            <person name="Rapoport G."/>
            <person name="Rey M."/>
            <person name="Reynolds S."/>
            <person name="Rieger M."/>
            <person name="Rivolta C."/>
            <person name="Rocha E."/>
            <person name="Roche B."/>
            <person name="Rose M."/>
            <person name="Sadaie Y."/>
            <person name="Sato T."/>
            <person name="Scanlan E."/>
            <person name="Schleich S."/>
            <person name="Schroeter R."/>
            <person name="Scoffone F."/>
            <person name="Sekiguchi J."/>
            <person name="Sekowska A."/>
            <person name="Seror S.J."/>
            <person name="Serror P."/>
            <person name="Shin B.-S."/>
            <person name="Soldo B."/>
            <person name="Sorokin A."/>
            <person name="Tacconi E."/>
            <person name="Takagi T."/>
            <person name="Takahashi H."/>
            <person name="Takemaru K."/>
            <person name="Takeuchi M."/>
            <person name="Tamakoshi A."/>
            <person name="Tanaka T."/>
            <person name="Terpstra P."/>
            <person name="Tognoni A."/>
            <person name="Tosato V."/>
            <person name="Uchiyama S."/>
            <person name="Vandenbol M."/>
            <person name="Vannier F."/>
            <person name="Vassarotti A."/>
            <person name="Viari A."/>
            <person name="Wambutt R."/>
            <person name="Wedler E."/>
            <person name="Wedler H."/>
            <person name="Weitzenegger T."/>
            <person name="Winters P."/>
            <person name="Wipat A."/>
            <person name="Yamamoto H."/>
            <person name="Yamane K."/>
            <person name="Yasumoto K."/>
            <person name="Yata K."/>
            <person name="Yoshida K."/>
            <person name="Yoshikawa H.-F."/>
            <person name="Zumstein E."/>
            <person name="Yoshikawa H."/>
            <person name="Danchin A."/>
        </authorList>
    </citation>
    <scope>NUCLEOTIDE SEQUENCE [LARGE SCALE GENOMIC DNA]</scope>
    <source>
        <strain>168</strain>
    </source>
</reference>
<protein>
    <recommendedName>
        <fullName>Uncharacterized protein YoyC</fullName>
    </recommendedName>
</protein>
<gene>
    <name type="primary">yoyC</name>
    <name type="synonym">yojE</name>
    <name type="ordered locus">BSU19479</name>
</gene>
<dbReference type="EMBL" id="AF026147">
    <property type="protein sequence ID" value="AAC17853.1"/>
    <property type="molecule type" value="Genomic_DNA"/>
</dbReference>
<dbReference type="EMBL" id="AL009126">
    <property type="protein sequence ID" value="CAX52638.1"/>
    <property type="molecule type" value="Genomic_DNA"/>
</dbReference>
<dbReference type="RefSeq" id="WP_003231211.1">
    <property type="nucleotide sequence ID" value="NZ_OZ025638.1"/>
</dbReference>
<dbReference type="RefSeq" id="YP_003097741.1">
    <property type="nucleotide sequence ID" value="NC_000964.3"/>
</dbReference>
<dbReference type="SMR" id="O68260"/>
<dbReference type="FunCoup" id="O68260">
    <property type="interactions" value="44"/>
</dbReference>
<dbReference type="STRING" id="224308.BSU19479"/>
<dbReference type="PaxDb" id="224308-BSU19479"/>
<dbReference type="EnsemblBacteria" id="CAX52638">
    <property type="protein sequence ID" value="CAX52638"/>
    <property type="gene ID" value="BSU_19479"/>
</dbReference>
<dbReference type="GeneID" id="8303009"/>
<dbReference type="KEGG" id="bsu:BSU19479"/>
<dbReference type="PATRIC" id="fig|224308.179.peg.2130"/>
<dbReference type="eggNOG" id="ENOG50304J1">
    <property type="taxonomic scope" value="Bacteria"/>
</dbReference>
<dbReference type="InParanoid" id="O68260"/>
<dbReference type="OrthoDB" id="2454083at2"/>
<dbReference type="BioCyc" id="BSUB:BSU19479-MONOMER"/>
<dbReference type="Proteomes" id="UP000001570">
    <property type="component" value="Chromosome"/>
</dbReference>
<sequence length="92" mass="10750">MDNDKEIVKAYASLWNNRSLAHDDAEAVAEAIDLELLDKRTHPRLRKPMLEKYFAAIQRIVNSQLEPAVKYQLVKLHTERAEYLKEERGEQS</sequence>
<proteinExistence type="predicted"/>
<organism>
    <name type="scientific">Bacillus subtilis (strain 168)</name>
    <dbReference type="NCBI Taxonomy" id="224308"/>
    <lineage>
        <taxon>Bacteria</taxon>
        <taxon>Bacillati</taxon>
        <taxon>Bacillota</taxon>
        <taxon>Bacilli</taxon>
        <taxon>Bacillales</taxon>
        <taxon>Bacillaceae</taxon>
        <taxon>Bacillus</taxon>
    </lineage>
</organism>
<name>YOYC_BACSU</name>
<feature type="chain" id="PRO_0000379104" description="Uncharacterized protein YoyC">
    <location>
        <begin position="1"/>
        <end position="92"/>
    </location>
</feature>
<keyword id="KW-1185">Reference proteome</keyword>